<proteinExistence type="evidence at protein level"/>
<dbReference type="GO" id="GO:0005576">
    <property type="term" value="C:extracellular region"/>
    <property type="evidence" value="ECO:0007669"/>
    <property type="project" value="UniProtKB-SubCell"/>
</dbReference>
<dbReference type="GO" id="GO:0031713">
    <property type="term" value="F:B2 bradykinin receptor binding"/>
    <property type="evidence" value="ECO:0000314"/>
    <property type="project" value="UniProtKB"/>
</dbReference>
<dbReference type="GO" id="GO:0090729">
    <property type="term" value="F:toxin activity"/>
    <property type="evidence" value="ECO:0000314"/>
    <property type="project" value="UniProtKB"/>
</dbReference>
<dbReference type="GO" id="GO:0044514">
    <property type="term" value="P:venom-mediated activation of G protein-coupled signaling in another organism"/>
    <property type="evidence" value="ECO:0000314"/>
    <property type="project" value="UniProtKB"/>
</dbReference>
<feature type="peptide" id="PRO_0000452238" description="Thr6-bradykinin" evidence="1">
    <location>
        <begin position="1"/>
        <end position="9"/>
    </location>
</feature>
<accession>C0HLT7</accession>
<comment type="function">
    <text evidence="1">When injected into the rat central nervous system, exhibits antinociceptive effects such as increasing hot plate and tail flick withdrawal latencies in a dose- and time-dependent fashion (PubMed:17533426). Likely to act on the bradykinin receptor B2 (BDKRB2) (PubMed:17533426). The greatest antinociceptive effects occurs 30 minutes after injection in hot plate (ED(50)=6.82 nM) and tail flick tests (ED(50)=2.94 nM) (PubMed:17533426).</text>
</comment>
<comment type="subcellular location">
    <subcellularLocation>
        <location evidence="1 2">Secreted</location>
    </subcellularLocation>
</comment>
<comment type="tissue specificity">
    <text evidence="5 6">Expressed in the venom reservoir.</text>
</comment>
<comment type="mass spectrometry" mass="1074.8" method="Electrospray" evidence="1"/>
<comment type="mass spectrometry" mass="1073.0" error="2.0" method="Electrospray" evidence="2"/>
<comment type="similarity">
    <text evidence="4">Belongs to the bradykinin-related peptide family.</text>
</comment>
<sequence length="9" mass="1074">RPPGFTPFR</sequence>
<protein>
    <recommendedName>
        <fullName evidence="3">Thr6-bradykinin</fullName>
    </recommendedName>
    <alternativeName>
        <fullName evidence="4">Bradykinin-related peptide</fullName>
    </alternativeName>
</protein>
<reference key="1">
    <citation type="journal article" date="2007" name="Br. J. Pharmacol.">
        <title>Inhibition of acute nociceptive responses in rats after i.c.v. injection of Thr6-bradykinin, isolated from the venom of the social wasp, Polybia occidentalis.</title>
        <authorList>
            <person name="Mortari M.R."/>
            <person name="Cunha A.O."/>
            <person name="Carolino R.O."/>
            <person name="Coutinho-Netto J."/>
            <person name="Tomaz J.C."/>
            <person name="Lopes N.P."/>
            <person name="Coimbra N.C."/>
            <person name="Dos Santos W.F."/>
        </authorList>
    </citation>
    <scope>PROTEIN SEQUENCE</scope>
    <scope>FUNCTION</scope>
    <scope>SUBCELLULAR LOCATION</scope>
    <scope>IDENTIFICATION BY MASS SPECTROMETRY</scope>
    <source>
        <tissue>Venom gland</tissue>
    </source>
</reference>
<reference key="2">
    <citation type="submission" date="2020-10" db="UniProtKB">
        <authorList>
            <person name="Genta-Jouve G."/>
        </authorList>
    </citation>
    <scope>PROTEIN SEQUENCE</scope>
    <scope>SUBCELLULAR LOCATION</scope>
    <scope>IDENTIFICATION BY MASS SPECTROMETRY</scope>
</reference>
<name>BRK_POLOC</name>
<keyword id="KW-1222">Bradykinin receptor impairing toxin</keyword>
<keyword id="KW-0903">Direct protein sequencing</keyword>
<keyword id="KW-1213">G-protein coupled receptor impairing toxin</keyword>
<keyword id="KW-0528">Neurotoxin</keyword>
<keyword id="KW-0964">Secreted</keyword>
<keyword id="KW-0800">Toxin</keyword>
<organism>
    <name type="scientific">Polybia occidentalis</name>
    <name type="common">Paper wasp</name>
    <dbReference type="NCBI Taxonomy" id="91432"/>
    <lineage>
        <taxon>Eukaryota</taxon>
        <taxon>Metazoa</taxon>
        <taxon>Ecdysozoa</taxon>
        <taxon>Arthropoda</taxon>
        <taxon>Hexapoda</taxon>
        <taxon>Insecta</taxon>
        <taxon>Pterygota</taxon>
        <taxon>Neoptera</taxon>
        <taxon>Endopterygota</taxon>
        <taxon>Hymenoptera</taxon>
        <taxon>Apocrita</taxon>
        <taxon>Aculeata</taxon>
        <taxon>Vespoidea</taxon>
        <taxon>Vespidae</taxon>
        <taxon>Polistinae</taxon>
        <taxon>Epiponini</taxon>
        <taxon>Polybia</taxon>
    </lineage>
</organism>
<evidence type="ECO:0000269" key="1">
    <source>
    </source>
</evidence>
<evidence type="ECO:0000269" key="2">
    <source ref="2"/>
</evidence>
<evidence type="ECO:0000303" key="3">
    <source>
    </source>
</evidence>
<evidence type="ECO:0000305" key="4"/>
<evidence type="ECO:0000305" key="5">
    <source>
    </source>
</evidence>
<evidence type="ECO:0000305" key="6">
    <source ref="2"/>
</evidence>